<gene>
    <name type="primary">C6orf89</name>
    <name type="synonym">BRAP</name>
    <name type="ORF">UNQ177/PRO203</name>
</gene>
<proteinExistence type="evidence at protein level"/>
<comment type="function">
    <text evidence="2 3">Exhibits histone deacetylase (HDAC) enhancer properties (PubMed:23460338). May play a role in cell cycle progression and wound repair of bronchial epithelial cells (PubMed:21857995).</text>
</comment>
<comment type="subunit">
    <text evidence="2 3">Homodimer (PubMed:23460338). Interacts with BRS3 (PubMed:21857995). Interacts (via N-terminus) with SIN3B (PubMed:23460338).</text>
</comment>
<comment type="interaction">
    <interactant intactId="EBI-13322241">
        <id>Q6UWU4-2</id>
    </interactant>
    <interactant intactId="EBI-11988865">
        <id>A5PKU2</id>
        <label>TUSC5</label>
    </interactant>
    <organismsDiffer>false</organismsDiffer>
    <experiments>3</experiments>
</comment>
<comment type="subcellular location">
    <molecule>Isoform 1</molecule>
    <subcellularLocation>
        <location evidence="3">Golgi apparatus membrane</location>
        <topology evidence="3">Single-pass type II membrane protein</topology>
    </subcellularLocation>
    <subcellularLocation>
        <location evidence="3">Midbody</location>
    </subcellularLocation>
</comment>
<comment type="subcellular location">
    <molecule>Isoform 2</molecule>
    <subcellularLocation>
        <location evidence="3">Golgi apparatus membrane</location>
        <topology evidence="3">Single-pass type II membrane protein</topology>
    </subcellularLocation>
    <subcellularLocation>
        <location evidence="3">Midbody</location>
    </subcellularLocation>
</comment>
<comment type="subcellular location">
    <molecule>Isoform 3</molecule>
    <subcellularLocation>
        <location evidence="2">Cytoplasm</location>
    </subcellularLocation>
    <subcellularLocation>
        <location evidence="2 3">Nucleus</location>
        <location evidence="2 3">Nucleolus</location>
    </subcellularLocation>
    <text evidence="3">Retained in nucleolar organiser regions (NORs) in mitotic cells (PubMed:23460338).</text>
</comment>
<comment type="alternative products">
    <event type="alternative splicing"/>
    <isoform>
        <id>Q6UWU4-1</id>
        <name>1</name>
        <name>42/116mp</name>
        <sequence type="displayed"/>
    </isoform>
    <isoform>
        <id>Q6UWU4-2</id>
        <name>2</name>
        <sequence type="described" ref="VSP_018598"/>
    </isoform>
    <isoform>
        <id>Q6UWU4-3</id>
        <name>3</name>
        <name>34/64sp</name>
        <sequence type="described" ref="VSP_058111"/>
    </isoform>
</comment>
<comment type="PTM">
    <text evidence="3">Glycosylated.</text>
</comment>
<comment type="miscellaneous">
    <text evidence="7">Named amfion, after 'the 4 Amfion heroes in Greek mythology and their deeds in different locations within the mother land.</text>
</comment>
<comment type="sequence caution" evidence="8">
    <conflict type="erroneous initiation">
        <sequence resource="EMBL-CDS" id="AAH23605"/>
    </conflict>
    <text>Extended N-terminus.</text>
</comment>
<comment type="sequence caution" evidence="8">
    <conflict type="erroneous initiation">
        <sequence resource="EMBL-CDS" id="CAD98021"/>
    </conflict>
    <text>Extended N-terminus.</text>
</comment>
<sequence length="347" mass="39870">MDLAANEISIYDKLSETVDLVRQTGHQCGMSEKAIEKFIRQLLEKNEPQRPPPQYPLLIVVYKVLATLGLILLTAYFVIQPFSPLAPEPVLSGAHTWRSLIHHIRLMSLPIAKKYMSENKGVPLHGGDEDRPFPDFDPWWTNDCEQNESEPIPANCTGCAQKHLKVMLLEDAPRKFERLHPLVIKTGKPLLEEEIQHFLCQYPEATEGFSEGFFAKWWRCFPERWFPFPYPWRRPLNRSQMLRELFPVFTHLPFPKDASLNKCSFLHPEPVVGSKMHKMPDLFIIGSGEAMLQLIPPFQCRRHCQSVAMPIEPGDIGYVDTTHWKVYVIARGVQPLVICDGTAFSEL</sequence>
<evidence type="ECO:0000255" key="1"/>
<evidence type="ECO:0000269" key="2">
    <source>
    </source>
</evidence>
<evidence type="ECO:0000269" key="3">
    <source>
    </source>
</evidence>
<evidence type="ECO:0000303" key="4">
    <source>
    </source>
</evidence>
<evidence type="ECO:0000303" key="5">
    <source>
    </source>
</evidence>
<evidence type="ECO:0000303" key="6">
    <source>
    </source>
</evidence>
<evidence type="ECO:0000303" key="7">
    <source>
    </source>
</evidence>
<evidence type="ECO:0000305" key="8"/>
<evidence type="ECO:0000305" key="9">
    <source>
    </source>
</evidence>
<protein>
    <recommendedName>
        <fullName>Bombesin receptor-activated protein C6orf89</fullName>
    </recommendedName>
    <alternativeName>
        <fullName evidence="7">Amfion</fullName>
    </alternativeName>
</protein>
<name>CF089_HUMAN</name>
<feature type="chain" id="PRO_0000237621" description="Bombesin receptor-activated protein C6orf89">
    <location>
        <begin position="1"/>
        <end position="347"/>
    </location>
</feature>
<feature type="topological domain" description="Cytoplasmic" evidence="9">
    <location>
        <begin position="1"/>
        <end position="58"/>
    </location>
</feature>
<feature type="transmembrane region" description="Helical" evidence="1">
    <location>
        <begin position="59"/>
        <end position="79"/>
    </location>
</feature>
<feature type="topological domain" description="Extracellular" evidence="9">
    <location>
        <begin position="80"/>
        <end position="347"/>
    </location>
</feature>
<feature type="splice variant" id="VSP_058111" description="In isoform 3.">
    <location>
        <begin position="1"/>
        <end position="106"/>
    </location>
</feature>
<feature type="splice variant" id="VSP_018598" description="In isoform 2." evidence="4 5 6 7">
    <original>M</original>
    <variation>MDFILEDM</variation>
    <location>
        <position position="1"/>
    </location>
</feature>
<feature type="sequence conflict" description="In Ref. 4; CAD98021." evidence="8" ref="4">
    <original>A</original>
    <variation>V</variation>
    <location>
        <position position="5"/>
    </location>
</feature>
<feature type="sequence conflict" description="In Ref. 1; CCA30148/CCA30149." evidence="8" ref="1">
    <original>D</original>
    <variation>H</variation>
    <location>
        <position position="171"/>
    </location>
</feature>
<feature type="sequence conflict" description="In Ref. 3; BAH14355." evidence="8" ref="3">
    <original>P</original>
    <variation>A</variation>
    <location>
        <position position="189"/>
    </location>
</feature>
<feature type="sequence conflict" description="In Ref. 4; CAD98021." evidence="8" ref="4">
    <original>Y</original>
    <variation>C</variation>
    <location>
        <position position="327"/>
    </location>
</feature>
<accession>Q6UWU4</accession>
<accession>B4DTT1</accession>
<accession>B7Z9L9</accession>
<accession>F4NAR0</accession>
<accession>F4NAR1</accession>
<accession>Q5TDC5</accession>
<accession>Q6ZMG5</accession>
<accession>Q7Z356</accession>
<accession>Q8IZ35</accession>
<organism>
    <name type="scientific">Homo sapiens</name>
    <name type="common">Human</name>
    <dbReference type="NCBI Taxonomy" id="9606"/>
    <lineage>
        <taxon>Eukaryota</taxon>
        <taxon>Metazoa</taxon>
        <taxon>Chordata</taxon>
        <taxon>Craniata</taxon>
        <taxon>Vertebrata</taxon>
        <taxon>Euteleostomi</taxon>
        <taxon>Mammalia</taxon>
        <taxon>Eutheria</taxon>
        <taxon>Euarchontoglires</taxon>
        <taxon>Primates</taxon>
        <taxon>Haplorrhini</taxon>
        <taxon>Catarrhini</taxon>
        <taxon>Hominidae</taxon>
        <taxon>Homo</taxon>
    </lineage>
</organism>
<keyword id="KW-0025">Alternative splicing</keyword>
<keyword id="KW-0963">Cytoplasm</keyword>
<keyword id="KW-0325">Glycoprotein</keyword>
<keyword id="KW-0333">Golgi apparatus</keyword>
<keyword id="KW-0472">Membrane</keyword>
<keyword id="KW-0539">Nucleus</keyword>
<keyword id="KW-1267">Proteomics identification</keyword>
<keyword id="KW-1185">Reference proteome</keyword>
<keyword id="KW-0735">Signal-anchor</keyword>
<keyword id="KW-0812">Transmembrane</keyword>
<keyword id="KW-1133">Transmembrane helix</keyword>
<dbReference type="EMBL" id="FR832871">
    <property type="protein sequence ID" value="CCA30148.1"/>
    <property type="molecule type" value="mRNA"/>
</dbReference>
<dbReference type="EMBL" id="FR832872">
    <property type="protein sequence ID" value="CCA30149.1"/>
    <property type="molecule type" value="mRNA"/>
</dbReference>
<dbReference type="EMBL" id="AY358637">
    <property type="protein sequence ID" value="AAQ89000.1"/>
    <property type="molecule type" value="mRNA"/>
</dbReference>
<dbReference type="EMBL" id="AK172780">
    <property type="protein sequence ID" value="BAD18761.1"/>
    <property type="molecule type" value="mRNA"/>
</dbReference>
<dbReference type="EMBL" id="AK300351">
    <property type="protein sequence ID" value="BAG62093.1"/>
    <property type="molecule type" value="mRNA"/>
</dbReference>
<dbReference type="EMBL" id="AK315984">
    <property type="protein sequence ID" value="BAH14355.1"/>
    <property type="molecule type" value="mRNA"/>
</dbReference>
<dbReference type="EMBL" id="BX538108">
    <property type="protein sequence ID" value="CAD98021.1"/>
    <property type="status" value="ALT_INIT"/>
    <property type="molecule type" value="mRNA"/>
</dbReference>
<dbReference type="EMBL" id="AL122034">
    <property type="status" value="NOT_ANNOTATED_CDS"/>
    <property type="molecule type" value="Genomic_DNA"/>
</dbReference>
<dbReference type="EMBL" id="CH471081">
    <property type="protein sequence ID" value="EAX03920.1"/>
    <property type="molecule type" value="Genomic_DNA"/>
</dbReference>
<dbReference type="EMBL" id="CH471081">
    <property type="protein sequence ID" value="EAX03919.1"/>
    <property type="molecule type" value="Genomic_DNA"/>
</dbReference>
<dbReference type="EMBL" id="BC023605">
    <property type="protein sequence ID" value="AAH23605.2"/>
    <property type="status" value="ALT_INIT"/>
    <property type="molecule type" value="mRNA"/>
</dbReference>
<dbReference type="EMBL" id="BC095423">
    <property type="protein sequence ID" value="AAH95423.1"/>
    <property type="molecule type" value="mRNA"/>
</dbReference>
<dbReference type="EMBL" id="BC105947">
    <property type="protein sequence ID" value="AAI05948.1"/>
    <property type="molecule type" value="mRNA"/>
</dbReference>
<dbReference type="EMBL" id="BC107489">
    <property type="protein sequence ID" value="AAI07490.1"/>
    <property type="molecule type" value="mRNA"/>
</dbReference>
<dbReference type="EMBL" id="BC105946">
    <property type="protein sequence ID" value="AAI05947.1"/>
    <property type="molecule type" value="mRNA"/>
</dbReference>
<dbReference type="CCDS" id="CCDS4827.1">
    <molecule id="Q6UWU4-2"/>
</dbReference>
<dbReference type="CCDS" id="CCDS69100.1">
    <molecule id="Q6UWU4-1"/>
</dbReference>
<dbReference type="CCDS" id="CCDS75444.1">
    <molecule id="Q6UWU4-3"/>
</dbReference>
<dbReference type="RefSeq" id="NP_001273564.1">
    <molecule id="Q6UWU4-1"/>
    <property type="nucleotide sequence ID" value="NM_001286635.2"/>
</dbReference>
<dbReference type="RefSeq" id="NP_001273565.1">
    <molecule id="Q6UWU4-3"/>
    <property type="nucleotide sequence ID" value="NM_001286636.2"/>
</dbReference>
<dbReference type="RefSeq" id="NP_001273566.1">
    <molecule id="Q6UWU4-3"/>
    <property type="nucleotide sequence ID" value="NM_001286637.2"/>
</dbReference>
<dbReference type="RefSeq" id="NP_689947.2">
    <molecule id="Q6UWU4-2"/>
    <property type="nucleotide sequence ID" value="NM_152734.3"/>
</dbReference>
<dbReference type="RefSeq" id="XP_011512679.1">
    <property type="nucleotide sequence ID" value="XM_011514377.2"/>
</dbReference>
<dbReference type="RefSeq" id="XP_016865921.1">
    <property type="nucleotide sequence ID" value="XM_017010432.1"/>
</dbReference>
<dbReference type="RefSeq" id="XP_016865922.1">
    <property type="nucleotide sequence ID" value="XM_017010433.1"/>
</dbReference>
<dbReference type="RefSeq" id="XP_016865923.1">
    <property type="nucleotide sequence ID" value="XM_017010434.1"/>
</dbReference>
<dbReference type="RefSeq" id="XP_047274292.1">
    <molecule id="Q6UWU4-1"/>
    <property type="nucleotide sequence ID" value="XM_047418336.1"/>
</dbReference>
<dbReference type="RefSeq" id="XP_047274293.1">
    <molecule id="Q6UWU4-1"/>
    <property type="nucleotide sequence ID" value="XM_047418337.1"/>
</dbReference>
<dbReference type="RefSeq" id="XP_047274294.1">
    <molecule id="Q6UWU4-1"/>
    <property type="nucleotide sequence ID" value="XM_047418338.1"/>
</dbReference>
<dbReference type="RefSeq" id="XP_047274295.1">
    <molecule id="Q6UWU4-1"/>
    <property type="nucleotide sequence ID" value="XM_047418339.1"/>
</dbReference>
<dbReference type="RefSeq" id="XP_047274296.1">
    <molecule id="Q6UWU4-1"/>
    <property type="nucleotide sequence ID" value="XM_047418340.1"/>
</dbReference>
<dbReference type="RefSeq" id="XP_047274297.1">
    <molecule id="Q6UWU4-1"/>
    <property type="nucleotide sequence ID" value="XM_047418341.1"/>
</dbReference>
<dbReference type="RefSeq" id="XP_047274298.1">
    <molecule id="Q6UWU4-1"/>
    <property type="nucleotide sequence ID" value="XM_047418342.1"/>
</dbReference>
<dbReference type="RefSeq" id="XP_054210562.1">
    <molecule id="Q6UWU4-1"/>
    <property type="nucleotide sequence ID" value="XM_054354587.1"/>
</dbReference>
<dbReference type="RefSeq" id="XP_054210563.1">
    <molecule id="Q6UWU4-1"/>
    <property type="nucleotide sequence ID" value="XM_054354588.1"/>
</dbReference>
<dbReference type="RefSeq" id="XP_054210564.1">
    <molecule id="Q6UWU4-1"/>
    <property type="nucleotide sequence ID" value="XM_054354589.1"/>
</dbReference>
<dbReference type="RefSeq" id="XP_054210565.1">
    <molecule id="Q6UWU4-1"/>
    <property type="nucleotide sequence ID" value="XM_054354590.1"/>
</dbReference>
<dbReference type="SMR" id="Q6UWU4"/>
<dbReference type="BioGRID" id="128732">
    <property type="interactions" value="8"/>
</dbReference>
<dbReference type="FunCoup" id="Q6UWU4">
    <property type="interactions" value="776"/>
</dbReference>
<dbReference type="IntAct" id="Q6UWU4">
    <property type="interactions" value="4"/>
</dbReference>
<dbReference type="STRING" id="9606.ENSP00000347322"/>
<dbReference type="GlyGen" id="Q6UWU4">
    <property type="glycosylation" value="2 sites, 2 N-linked glycans (2 sites)"/>
</dbReference>
<dbReference type="iPTMnet" id="Q6UWU4"/>
<dbReference type="PhosphoSitePlus" id="Q6UWU4"/>
<dbReference type="BioMuta" id="C6orf89"/>
<dbReference type="jPOST" id="Q6UWU4"/>
<dbReference type="MassIVE" id="Q6UWU4"/>
<dbReference type="PaxDb" id="9606-ENSP00000347322"/>
<dbReference type="PeptideAtlas" id="Q6UWU4"/>
<dbReference type="ProteomicsDB" id="65011"/>
<dbReference type="ProteomicsDB" id="67525">
    <molecule id="Q6UWU4-1"/>
</dbReference>
<dbReference type="ProteomicsDB" id="67526">
    <molecule id="Q6UWU4-2"/>
</dbReference>
<dbReference type="Pumba" id="Q6UWU4"/>
<dbReference type="Antibodypedia" id="2729">
    <property type="antibodies" value="34 antibodies from 10 providers"/>
</dbReference>
<dbReference type="DNASU" id="221477"/>
<dbReference type="Ensembl" id="ENST00000355190.7">
    <molecule id="Q6UWU4-2"/>
    <property type="protein sequence ID" value="ENSP00000347322.3"/>
    <property type="gene ID" value="ENSG00000198663.17"/>
</dbReference>
<dbReference type="Ensembl" id="ENST00000359359.6">
    <molecule id="Q6UWU4-3"/>
    <property type="protein sequence ID" value="ENSP00000352316.2"/>
    <property type="gene ID" value="ENSG00000198663.17"/>
</dbReference>
<dbReference type="Ensembl" id="ENST00000373685.1">
    <molecule id="Q6UWU4-1"/>
    <property type="protein sequence ID" value="ENSP00000362789.1"/>
    <property type="gene ID" value="ENSG00000198663.17"/>
</dbReference>
<dbReference type="Ensembl" id="ENST00000480824.7">
    <molecule id="Q6UWU4-1"/>
    <property type="protein sequence ID" value="ENSP00000475947.1"/>
    <property type="gene ID" value="ENSG00000198663.17"/>
</dbReference>
<dbReference type="GeneID" id="221477"/>
<dbReference type="KEGG" id="hsa:221477"/>
<dbReference type="MANE-Select" id="ENST00000480824.7">
    <property type="protein sequence ID" value="ENSP00000475947.1"/>
    <property type="RefSeq nucleotide sequence ID" value="NM_001286635.2"/>
    <property type="RefSeq protein sequence ID" value="NP_001273564.1"/>
</dbReference>
<dbReference type="UCSC" id="uc003omw.4">
    <molecule id="Q6UWU4-1"/>
    <property type="organism name" value="human"/>
</dbReference>
<dbReference type="UCSC" id="uc063oez.1">
    <property type="organism name" value="human"/>
</dbReference>
<dbReference type="AGR" id="HGNC:21114"/>
<dbReference type="CTD" id="221477"/>
<dbReference type="DisGeNET" id="221477"/>
<dbReference type="GeneCards" id="C6orf89"/>
<dbReference type="HGNC" id="HGNC:21114">
    <property type="gene designation" value="C6orf89"/>
</dbReference>
<dbReference type="HPA" id="ENSG00000198663">
    <property type="expression patterns" value="Low tissue specificity"/>
</dbReference>
<dbReference type="MIM" id="616642">
    <property type="type" value="gene"/>
</dbReference>
<dbReference type="neXtProt" id="NX_Q6UWU4"/>
<dbReference type="OpenTargets" id="ENSG00000198663"/>
<dbReference type="PharmGKB" id="PA134986915"/>
<dbReference type="VEuPathDB" id="HostDB:ENSG00000198663"/>
<dbReference type="eggNOG" id="ENOG502S363">
    <property type="taxonomic scope" value="Eukaryota"/>
</dbReference>
<dbReference type="GeneTree" id="ENSGT00390000014270"/>
<dbReference type="HOGENOM" id="CLU_796829_0_0_1"/>
<dbReference type="InParanoid" id="Q6UWU4"/>
<dbReference type="OMA" id="FMAKGTE"/>
<dbReference type="OrthoDB" id="10036464at2759"/>
<dbReference type="PAN-GO" id="Q6UWU4">
    <property type="GO annotations" value="3 GO annotations based on evolutionary models"/>
</dbReference>
<dbReference type="PhylomeDB" id="Q6UWU4"/>
<dbReference type="TreeFam" id="TF335525"/>
<dbReference type="PathwayCommons" id="Q6UWU4"/>
<dbReference type="SignaLink" id="Q6UWU4"/>
<dbReference type="BioGRID-ORCS" id="221477">
    <property type="hits" value="46 hits in 1144 CRISPR screens"/>
</dbReference>
<dbReference type="CD-CODE" id="91857CE7">
    <property type="entry name" value="Nucleolus"/>
</dbReference>
<dbReference type="ChiTaRS" id="C6orf89">
    <property type="organism name" value="human"/>
</dbReference>
<dbReference type="GeneWiki" id="C6orf89"/>
<dbReference type="GenomeRNAi" id="221477"/>
<dbReference type="Pharos" id="Q6UWU4">
    <property type="development level" value="Tbio"/>
</dbReference>
<dbReference type="PRO" id="PR:Q6UWU4"/>
<dbReference type="Proteomes" id="UP000005640">
    <property type="component" value="Chromosome 6"/>
</dbReference>
<dbReference type="RNAct" id="Q6UWU4">
    <property type="molecule type" value="protein"/>
</dbReference>
<dbReference type="Bgee" id="ENSG00000198663">
    <property type="expression patterns" value="Expressed in left ventricle myocardium and 192 other cell types or tissues"/>
</dbReference>
<dbReference type="ExpressionAtlas" id="Q6UWU4">
    <property type="expression patterns" value="baseline and differential"/>
</dbReference>
<dbReference type="GO" id="GO:0005737">
    <property type="term" value="C:cytoplasm"/>
    <property type="evidence" value="ECO:0000314"/>
    <property type="project" value="UniProtKB"/>
</dbReference>
<dbReference type="GO" id="GO:0000139">
    <property type="term" value="C:Golgi membrane"/>
    <property type="evidence" value="ECO:0000314"/>
    <property type="project" value="UniProtKB"/>
</dbReference>
<dbReference type="GO" id="GO:0030496">
    <property type="term" value="C:midbody"/>
    <property type="evidence" value="ECO:0000314"/>
    <property type="project" value="UniProtKB"/>
</dbReference>
<dbReference type="GO" id="GO:0005730">
    <property type="term" value="C:nucleolus"/>
    <property type="evidence" value="ECO:0000314"/>
    <property type="project" value="UniProtKB"/>
</dbReference>
<dbReference type="GO" id="GO:0005886">
    <property type="term" value="C:plasma membrane"/>
    <property type="evidence" value="ECO:0000314"/>
    <property type="project" value="UniProtKB"/>
</dbReference>
<dbReference type="GO" id="GO:0006914">
    <property type="term" value="P:autophagy"/>
    <property type="evidence" value="ECO:0007669"/>
    <property type="project" value="Ensembl"/>
</dbReference>
<dbReference type="GO" id="GO:0006338">
    <property type="term" value="P:chromatin remodeling"/>
    <property type="evidence" value="ECO:0000314"/>
    <property type="project" value="UniProtKB"/>
</dbReference>
<dbReference type="GO" id="GO:0032963">
    <property type="term" value="P:collagen metabolic process"/>
    <property type="evidence" value="ECO:0007669"/>
    <property type="project" value="Ensembl"/>
</dbReference>
<dbReference type="GO" id="GO:0097709">
    <property type="term" value="P:connective tissue replacement"/>
    <property type="evidence" value="ECO:0007669"/>
    <property type="project" value="Ensembl"/>
</dbReference>
<dbReference type="GO" id="GO:0050673">
    <property type="term" value="P:epithelial cell proliferation"/>
    <property type="evidence" value="ECO:0000314"/>
    <property type="project" value="UniProtKB"/>
</dbReference>
<dbReference type="GO" id="GO:0048144">
    <property type="term" value="P:fibroblast proliferation"/>
    <property type="evidence" value="ECO:0007669"/>
    <property type="project" value="Ensembl"/>
</dbReference>
<dbReference type="GO" id="GO:0045787">
    <property type="term" value="P:positive regulation of cell cycle"/>
    <property type="evidence" value="ECO:0000314"/>
    <property type="project" value="UniProtKB"/>
</dbReference>
<dbReference type="GO" id="GO:1904975">
    <property type="term" value="P:response to bleomycin"/>
    <property type="evidence" value="ECO:0007669"/>
    <property type="project" value="Ensembl"/>
</dbReference>
<dbReference type="GO" id="GO:0042060">
    <property type="term" value="P:wound healing"/>
    <property type="evidence" value="ECO:0000314"/>
    <property type="project" value="UniProtKB"/>
</dbReference>
<dbReference type="InterPro" id="IPR038757">
    <property type="entry name" value="BRAP"/>
</dbReference>
<dbReference type="PANTHER" id="PTHR35259">
    <property type="entry name" value="BOMBESIN RECEPTOR-ACTIVATED PROTEIN C6ORF89"/>
    <property type="match status" value="1"/>
</dbReference>
<dbReference type="PANTHER" id="PTHR35259:SF1">
    <property type="entry name" value="BOMBESIN RECEPTOR-ACTIVATED PROTEIN C6ORF89"/>
    <property type="match status" value="1"/>
</dbReference>
<reference key="1">
    <citation type="journal article" date="2013" name="J. Cell. Physiol.">
        <title>C6orf89 encodes three distinct HDAC enhancers that function in the nucleolus, the Golgi and the midbody.</title>
        <authorList>
            <person name="Lalioti V.S."/>
            <person name="Vergarajauregui S."/>
            <person name="Villasante A."/>
            <person name="Pulido D."/>
            <person name="Sandoval I.V."/>
        </authorList>
    </citation>
    <scope>NUCLEOTIDE SEQUENCE [MRNA] (ISOFORMS 1 AND 2)</scope>
    <scope>FUNCTION</scope>
    <scope>SUBCELLULAR LOCATION (ISOFORMS 1; 2 AND 3)</scope>
    <scope>INTERACTION WITH SIN3B</scope>
    <scope>TOPOLOGY</scope>
    <scope>GLYCOSYLATION</scope>
    <scope>SUBUNIT</scope>
    <source>
        <tissue>Adipocyte</tissue>
    </source>
</reference>
<reference key="2">
    <citation type="journal article" date="2003" name="Genome Res.">
        <title>The secreted protein discovery initiative (SPDI), a large-scale effort to identify novel human secreted and transmembrane proteins: a bioinformatics assessment.</title>
        <authorList>
            <person name="Clark H.F."/>
            <person name="Gurney A.L."/>
            <person name="Abaya E."/>
            <person name="Baker K."/>
            <person name="Baldwin D.T."/>
            <person name="Brush J."/>
            <person name="Chen J."/>
            <person name="Chow B."/>
            <person name="Chui C."/>
            <person name="Crowley C."/>
            <person name="Currell B."/>
            <person name="Deuel B."/>
            <person name="Dowd P."/>
            <person name="Eaton D."/>
            <person name="Foster J.S."/>
            <person name="Grimaldi C."/>
            <person name="Gu Q."/>
            <person name="Hass P.E."/>
            <person name="Heldens S."/>
            <person name="Huang A."/>
            <person name="Kim H.S."/>
            <person name="Klimowski L."/>
            <person name="Jin Y."/>
            <person name="Johnson S."/>
            <person name="Lee J."/>
            <person name="Lewis L."/>
            <person name="Liao D."/>
            <person name="Mark M.R."/>
            <person name="Robbie E."/>
            <person name="Sanchez C."/>
            <person name="Schoenfeld J."/>
            <person name="Seshagiri S."/>
            <person name="Simmons L."/>
            <person name="Singh J."/>
            <person name="Smith V."/>
            <person name="Stinson J."/>
            <person name="Vagts A."/>
            <person name="Vandlen R.L."/>
            <person name="Watanabe C."/>
            <person name="Wieand D."/>
            <person name="Woods K."/>
            <person name="Xie M.-H."/>
            <person name="Yansura D.G."/>
            <person name="Yi S."/>
            <person name="Yu G."/>
            <person name="Yuan J."/>
            <person name="Zhang M."/>
            <person name="Zhang Z."/>
            <person name="Goddard A.D."/>
            <person name="Wood W.I."/>
            <person name="Godowski P.J."/>
            <person name="Gray A.M."/>
        </authorList>
    </citation>
    <scope>NUCLEOTIDE SEQUENCE [LARGE SCALE MRNA] (ISOFORM 1)</scope>
</reference>
<reference key="3">
    <citation type="journal article" date="2004" name="Nat. Genet.">
        <title>Complete sequencing and characterization of 21,243 full-length human cDNAs.</title>
        <authorList>
            <person name="Ota T."/>
            <person name="Suzuki Y."/>
            <person name="Nishikawa T."/>
            <person name="Otsuki T."/>
            <person name="Sugiyama T."/>
            <person name="Irie R."/>
            <person name="Wakamatsu A."/>
            <person name="Hayashi K."/>
            <person name="Sato H."/>
            <person name="Nagai K."/>
            <person name="Kimura K."/>
            <person name="Makita H."/>
            <person name="Sekine M."/>
            <person name="Obayashi M."/>
            <person name="Nishi T."/>
            <person name="Shibahara T."/>
            <person name="Tanaka T."/>
            <person name="Ishii S."/>
            <person name="Yamamoto J."/>
            <person name="Saito K."/>
            <person name="Kawai Y."/>
            <person name="Isono Y."/>
            <person name="Nakamura Y."/>
            <person name="Nagahari K."/>
            <person name="Murakami K."/>
            <person name="Yasuda T."/>
            <person name="Iwayanagi T."/>
            <person name="Wagatsuma M."/>
            <person name="Shiratori A."/>
            <person name="Sudo H."/>
            <person name="Hosoiri T."/>
            <person name="Kaku Y."/>
            <person name="Kodaira H."/>
            <person name="Kondo H."/>
            <person name="Sugawara M."/>
            <person name="Takahashi M."/>
            <person name="Kanda K."/>
            <person name="Yokoi T."/>
            <person name="Furuya T."/>
            <person name="Kikkawa E."/>
            <person name="Omura Y."/>
            <person name="Abe K."/>
            <person name="Kamihara K."/>
            <person name="Katsuta N."/>
            <person name="Sato K."/>
            <person name="Tanikawa M."/>
            <person name="Yamazaki M."/>
            <person name="Ninomiya K."/>
            <person name="Ishibashi T."/>
            <person name="Yamashita H."/>
            <person name="Murakawa K."/>
            <person name="Fujimori K."/>
            <person name="Tanai H."/>
            <person name="Kimata M."/>
            <person name="Watanabe M."/>
            <person name="Hiraoka S."/>
            <person name="Chiba Y."/>
            <person name="Ishida S."/>
            <person name="Ono Y."/>
            <person name="Takiguchi S."/>
            <person name="Watanabe S."/>
            <person name="Yosida M."/>
            <person name="Hotuta T."/>
            <person name="Kusano J."/>
            <person name="Kanehori K."/>
            <person name="Takahashi-Fujii A."/>
            <person name="Hara H."/>
            <person name="Tanase T.-O."/>
            <person name="Nomura Y."/>
            <person name="Togiya S."/>
            <person name="Komai F."/>
            <person name="Hara R."/>
            <person name="Takeuchi K."/>
            <person name="Arita M."/>
            <person name="Imose N."/>
            <person name="Musashino K."/>
            <person name="Yuuki H."/>
            <person name="Oshima A."/>
            <person name="Sasaki N."/>
            <person name="Aotsuka S."/>
            <person name="Yoshikawa Y."/>
            <person name="Matsunawa H."/>
            <person name="Ichihara T."/>
            <person name="Shiohata N."/>
            <person name="Sano S."/>
            <person name="Moriya S."/>
            <person name="Momiyama H."/>
            <person name="Satoh N."/>
            <person name="Takami S."/>
            <person name="Terashima Y."/>
            <person name="Suzuki O."/>
            <person name="Nakagawa S."/>
            <person name="Senoh A."/>
            <person name="Mizoguchi H."/>
            <person name="Goto Y."/>
            <person name="Shimizu F."/>
            <person name="Wakebe H."/>
            <person name="Hishigaki H."/>
            <person name="Watanabe T."/>
            <person name="Sugiyama A."/>
            <person name="Takemoto M."/>
            <person name="Kawakami B."/>
            <person name="Yamazaki M."/>
            <person name="Watanabe K."/>
            <person name="Kumagai A."/>
            <person name="Itakura S."/>
            <person name="Fukuzumi Y."/>
            <person name="Fujimori Y."/>
            <person name="Komiyama M."/>
            <person name="Tashiro H."/>
            <person name="Tanigami A."/>
            <person name="Fujiwara T."/>
            <person name="Ono T."/>
            <person name="Yamada K."/>
            <person name="Fujii Y."/>
            <person name="Ozaki K."/>
            <person name="Hirao M."/>
            <person name="Ohmori Y."/>
            <person name="Kawabata A."/>
            <person name="Hikiji T."/>
            <person name="Kobatake N."/>
            <person name="Inagaki H."/>
            <person name="Ikema Y."/>
            <person name="Okamoto S."/>
            <person name="Okitani R."/>
            <person name="Kawakami T."/>
            <person name="Noguchi S."/>
            <person name="Itoh T."/>
            <person name="Shigeta K."/>
            <person name="Senba T."/>
            <person name="Matsumura K."/>
            <person name="Nakajima Y."/>
            <person name="Mizuno T."/>
            <person name="Morinaga M."/>
            <person name="Sasaki M."/>
            <person name="Togashi T."/>
            <person name="Oyama M."/>
            <person name="Hata H."/>
            <person name="Watanabe M."/>
            <person name="Komatsu T."/>
            <person name="Mizushima-Sugano J."/>
            <person name="Satoh T."/>
            <person name="Shirai Y."/>
            <person name="Takahashi Y."/>
            <person name="Nakagawa K."/>
            <person name="Okumura K."/>
            <person name="Nagase T."/>
            <person name="Nomura N."/>
            <person name="Kikuchi H."/>
            <person name="Masuho Y."/>
            <person name="Yamashita R."/>
            <person name="Nakai K."/>
            <person name="Yada T."/>
            <person name="Nakamura Y."/>
            <person name="Ohara O."/>
            <person name="Isogai T."/>
            <person name="Sugano S."/>
        </authorList>
    </citation>
    <scope>NUCLEOTIDE SEQUENCE [LARGE SCALE MRNA] (ISOFORMS 1; 2 AND 3)</scope>
    <source>
        <tissue>Placenta</tissue>
    </source>
</reference>
<reference key="4">
    <citation type="journal article" date="2007" name="BMC Genomics">
        <title>The full-ORF clone resource of the German cDNA consortium.</title>
        <authorList>
            <person name="Bechtel S."/>
            <person name="Rosenfelder H."/>
            <person name="Duda A."/>
            <person name="Schmidt C.P."/>
            <person name="Ernst U."/>
            <person name="Wellenreuther R."/>
            <person name="Mehrle A."/>
            <person name="Schuster C."/>
            <person name="Bahr A."/>
            <person name="Bloecker H."/>
            <person name="Heubner D."/>
            <person name="Hoerlein A."/>
            <person name="Michel G."/>
            <person name="Wedler H."/>
            <person name="Koehrer K."/>
            <person name="Ottenwaelder B."/>
            <person name="Poustka A."/>
            <person name="Wiemann S."/>
            <person name="Schupp I."/>
        </authorList>
    </citation>
    <scope>NUCLEOTIDE SEQUENCE [LARGE SCALE MRNA] (ISOFORM 2)</scope>
    <source>
        <tissue>Colon endothelium</tissue>
    </source>
</reference>
<reference key="5">
    <citation type="journal article" date="2003" name="Nature">
        <title>The DNA sequence and analysis of human chromosome 6.</title>
        <authorList>
            <person name="Mungall A.J."/>
            <person name="Palmer S.A."/>
            <person name="Sims S.K."/>
            <person name="Edwards C.A."/>
            <person name="Ashurst J.L."/>
            <person name="Wilming L."/>
            <person name="Jones M.C."/>
            <person name="Horton R."/>
            <person name="Hunt S.E."/>
            <person name="Scott C.E."/>
            <person name="Gilbert J.G.R."/>
            <person name="Clamp M.E."/>
            <person name="Bethel G."/>
            <person name="Milne S."/>
            <person name="Ainscough R."/>
            <person name="Almeida J.P."/>
            <person name="Ambrose K.D."/>
            <person name="Andrews T.D."/>
            <person name="Ashwell R.I.S."/>
            <person name="Babbage A.K."/>
            <person name="Bagguley C.L."/>
            <person name="Bailey J."/>
            <person name="Banerjee R."/>
            <person name="Barker D.J."/>
            <person name="Barlow K.F."/>
            <person name="Bates K."/>
            <person name="Beare D.M."/>
            <person name="Beasley H."/>
            <person name="Beasley O."/>
            <person name="Bird C.P."/>
            <person name="Blakey S.E."/>
            <person name="Bray-Allen S."/>
            <person name="Brook J."/>
            <person name="Brown A.J."/>
            <person name="Brown J.Y."/>
            <person name="Burford D.C."/>
            <person name="Burrill W."/>
            <person name="Burton J."/>
            <person name="Carder C."/>
            <person name="Carter N.P."/>
            <person name="Chapman J.C."/>
            <person name="Clark S.Y."/>
            <person name="Clark G."/>
            <person name="Clee C.M."/>
            <person name="Clegg S."/>
            <person name="Cobley V."/>
            <person name="Collier R.E."/>
            <person name="Collins J.E."/>
            <person name="Colman L.K."/>
            <person name="Corby N.R."/>
            <person name="Coville G.J."/>
            <person name="Culley K.M."/>
            <person name="Dhami P."/>
            <person name="Davies J."/>
            <person name="Dunn M."/>
            <person name="Earthrowl M.E."/>
            <person name="Ellington A.E."/>
            <person name="Evans K.A."/>
            <person name="Faulkner L."/>
            <person name="Francis M.D."/>
            <person name="Frankish A."/>
            <person name="Frankland J."/>
            <person name="French L."/>
            <person name="Garner P."/>
            <person name="Garnett J."/>
            <person name="Ghori M.J."/>
            <person name="Gilby L.M."/>
            <person name="Gillson C.J."/>
            <person name="Glithero R.J."/>
            <person name="Grafham D.V."/>
            <person name="Grant M."/>
            <person name="Gribble S."/>
            <person name="Griffiths C."/>
            <person name="Griffiths M.N.D."/>
            <person name="Hall R."/>
            <person name="Halls K.S."/>
            <person name="Hammond S."/>
            <person name="Harley J.L."/>
            <person name="Hart E.A."/>
            <person name="Heath P.D."/>
            <person name="Heathcott R."/>
            <person name="Holmes S.J."/>
            <person name="Howden P.J."/>
            <person name="Howe K.L."/>
            <person name="Howell G.R."/>
            <person name="Huckle E."/>
            <person name="Humphray S.J."/>
            <person name="Humphries M.D."/>
            <person name="Hunt A.R."/>
            <person name="Johnson C.M."/>
            <person name="Joy A.A."/>
            <person name="Kay M."/>
            <person name="Keenan S.J."/>
            <person name="Kimberley A.M."/>
            <person name="King A."/>
            <person name="Laird G.K."/>
            <person name="Langford C."/>
            <person name="Lawlor S."/>
            <person name="Leongamornlert D.A."/>
            <person name="Leversha M."/>
            <person name="Lloyd C.R."/>
            <person name="Lloyd D.M."/>
            <person name="Loveland J.E."/>
            <person name="Lovell J."/>
            <person name="Martin S."/>
            <person name="Mashreghi-Mohammadi M."/>
            <person name="Maslen G.L."/>
            <person name="Matthews L."/>
            <person name="McCann O.T."/>
            <person name="McLaren S.J."/>
            <person name="McLay K."/>
            <person name="McMurray A."/>
            <person name="Moore M.J.F."/>
            <person name="Mullikin J.C."/>
            <person name="Niblett D."/>
            <person name="Nickerson T."/>
            <person name="Novik K.L."/>
            <person name="Oliver K."/>
            <person name="Overton-Larty E.K."/>
            <person name="Parker A."/>
            <person name="Patel R."/>
            <person name="Pearce A.V."/>
            <person name="Peck A.I."/>
            <person name="Phillimore B.J.C.T."/>
            <person name="Phillips S."/>
            <person name="Plumb R.W."/>
            <person name="Porter K.M."/>
            <person name="Ramsey Y."/>
            <person name="Ranby S.A."/>
            <person name="Rice C.M."/>
            <person name="Ross M.T."/>
            <person name="Searle S.M."/>
            <person name="Sehra H.K."/>
            <person name="Sheridan E."/>
            <person name="Skuce C.D."/>
            <person name="Smith S."/>
            <person name="Smith M."/>
            <person name="Spraggon L."/>
            <person name="Squares S.L."/>
            <person name="Steward C.A."/>
            <person name="Sycamore N."/>
            <person name="Tamlyn-Hall G."/>
            <person name="Tester J."/>
            <person name="Theaker A.J."/>
            <person name="Thomas D.W."/>
            <person name="Thorpe A."/>
            <person name="Tracey A."/>
            <person name="Tromans A."/>
            <person name="Tubby B."/>
            <person name="Wall M."/>
            <person name="Wallis J.M."/>
            <person name="West A.P."/>
            <person name="White S.S."/>
            <person name="Whitehead S.L."/>
            <person name="Whittaker H."/>
            <person name="Wild A."/>
            <person name="Willey D.J."/>
            <person name="Wilmer T.E."/>
            <person name="Wood J.M."/>
            <person name="Wray P.W."/>
            <person name="Wyatt J.C."/>
            <person name="Young L."/>
            <person name="Younger R.M."/>
            <person name="Bentley D.R."/>
            <person name="Coulson A."/>
            <person name="Durbin R.M."/>
            <person name="Hubbard T."/>
            <person name="Sulston J.E."/>
            <person name="Dunham I."/>
            <person name="Rogers J."/>
            <person name="Beck S."/>
        </authorList>
    </citation>
    <scope>NUCLEOTIDE SEQUENCE [LARGE SCALE GENOMIC DNA]</scope>
</reference>
<reference key="6">
    <citation type="submission" date="2005-07" db="EMBL/GenBank/DDBJ databases">
        <authorList>
            <person name="Mural R.J."/>
            <person name="Istrail S."/>
            <person name="Sutton G.G."/>
            <person name="Florea L."/>
            <person name="Halpern A.L."/>
            <person name="Mobarry C.M."/>
            <person name="Lippert R."/>
            <person name="Walenz B."/>
            <person name="Shatkay H."/>
            <person name="Dew I."/>
            <person name="Miller J.R."/>
            <person name="Flanigan M.J."/>
            <person name="Edwards N.J."/>
            <person name="Bolanos R."/>
            <person name="Fasulo D."/>
            <person name="Halldorsson B.V."/>
            <person name="Hannenhalli S."/>
            <person name="Turner R."/>
            <person name="Yooseph S."/>
            <person name="Lu F."/>
            <person name="Nusskern D.R."/>
            <person name="Shue B.C."/>
            <person name="Zheng X.H."/>
            <person name="Zhong F."/>
            <person name="Delcher A.L."/>
            <person name="Huson D.H."/>
            <person name="Kravitz S.A."/>
            <person name="Mouchard L."/>
            <person name="Reinert K."/>
            <person name="Remington K.A."/>
            <person name="Clark A.G."/>
            <person name="Waterman M.S."/>
            <person name="Eichler E.E."/>
            <person name="Adams M.D."/>
            <person name="Hunkapiller M.W."/>
            <person name="Myers E.W."/>
            <person name="Venter J.C."/>
        </authorList>
    </citation>
    <scope>NUCLEOTIDE SEQUENCE [LARGE SCALE GENOMIC DNA]</scope>
</reference>
<reference key="7">
    <citation type="journal article" date="2004" name="Genome Res.">
        <title>The status, quality, and expansion of the NIH full-length cDNA project: the Mammalian Gene Collection (MGC).</title>
        <authorList>
            <consortium name="The MGC Project Team"/>
        </authorList>
    </citation>
    <scope>NUCLEOTIDE SEQUENCE [LARGE SCALE MRNA] (ISOFORMS 1 AND 2)</scope>
    <source>
        <tissue>Muscle</tissue>
        <tissue>Placenta</tissue>
    </source>
</reference>
<reference key="8">
    <citation type="journal article" date="2011" name="PLoS ONE">
        <title>Cloning of a novel protein interacting with BRS-3 and its effects in wound repair of bronchial epithelial cells.</title>
        <authorList>
            <person name="Liu H.J."/>
            <person name="Tan Y.R."/>
            <person name="Li M.L."/>
            <person name="Liu C."/>
            <person name="Xiang Y."/>
            <person name="Qin X.Q."/>
        </authorList>
    </citation>
    <scope>FUNCTION</scope>
    <scope>INTERACTION WITH BRS3</scope>
    <scope>SUBCELLULAR LOCATION (ISOFORM 2)</scope>
</reference>